<proteinExistence type="evidence at transcript level"/>
<organism>
    <name type="scientific">Oryza sativa subsp. indica</name>
    <name type="common">Rice</name>
    <dbReference type="NCBI Taxonomy" id="39946"/>
    <lineage>
        <taxon>Eukaryota</taxon>
        <taxon>Viridiplantae</taxon>
        <taxon>Streptophyta</taxon>
        <taxon>Embryophyta</taxon>
        <taxon>Tracheophyta</taxon>
        <taxon>Spermatophyta</taxon>
        <taxon>Magnoliopsida</taxon>
        <taxon>Liliopsida</taxon>
        <taxon>Poales</taxon>
        <taxon>Poaceae</taxon>
        <taxon>BOP clade</taxon>
        <taxon>Oryzoideae</taxon>
        <taxon>Oryzeae</taxon>
        <taxon>Oryzinae</taxon>
        <taxon>Oryza</taxon>
        <taxon>Oryza sativa</taxon>
    </lineage>
</organism>
<accession>Q7PC70</accession>
<accession>A2Z1G3</accession>
<accession>Q8W1M9</accession>
<evidence type="ECO:0000250" key="1"/>
<evidence type="ECO:0000255" key="2"/>
<evidence type="ECO:0000305" key="3"/>
<dbReference type="EC" id="2.4.1.-"/>
<dbReference type="EMBL" id="CM000134">
    <property type="status" value="NOT_ANNOTATED_CDS"/>
    <property type="molecule type" value="Genomic_DNA"/>
</dbReference>
<dbReference type="EMBL" id="AF435650">
    <property type="protein sequence ID" value="AAL38535.1"/>
    <property type="molecule type" value="mRNA"/>
</dbReference>
<dbReference type="EMBL" id="BK000087">
    <property type="protein sequence ID" value="DAA01750.1"/>
    <property type="molecule type" value="Genomic_DNA"/>
</dbReference>
<dbReference type="SMR" id="Q7PC70"/>
<dbReference type="STRING" id="39946.Q7PC70"/>
<dbReference type="CAZy" id="GT2">
    <property type="family name" value="Glycosyltransferase Family 2"/>
</dbReference>
<dbReference type="HOGENOM" id="CLU_012856_1_0_1"/>
<dbReference type="Proteomes" id="UP000007015">
    <property type="component" value="Chromosome 9"/>
</dbReference>
<dbReference type="GO" id="GO:0000139">
    <property type="term" value="C:Golgi membrane"/>
    <property type="evidence" value="ECO:0007669"/>
    <property type="project" value="UniProtKB-SubCell"/>
</dbReference>
<dbReference type="GO" id="GO:0016757">
    <property type="term" value="F:glycosyltransferase activity"/>
    <property type="evidence" value="ECO:0007669"/>
    <property type="project" value="UniProtKB-KW"/>
</dbReference>
<dbReference type="GO" id="GO:0071555">
    <property type="term" value="P:cell wall organization"/>
    <property type="evidence" value="ECO:0007669"/>
    <property type="project" value="UniProtKB-KW"/>
</dbReference>
<dbReference type="FunFam" id="3.90.550.10:FF:000007">
    <property type="entry name" value="probable xyloglucan glycosyltransferase 5"/>
    <property type="match status" value="1"/>
</dbReference>
<dbReference type="Gene3D" id="3.90.550.10">
    <property type="entry name" value="Spore Coat Polysaccharide Biosynthesis Protein SpsA, Chain A"/>
    <property type="match status" value="1"/>
</dbReference>
<dbReference type="InterPro" id="IPR001173">
    <property type="entry name" value="Glyco_trans_2-like"/>
</dbReference>
<dbReference type="InterPro" id="IPR029044">
    <property type="entry name" value="Nucleotide-diphossugar_trans"/>
</dbReference>
<dbReference type="PANTHER" id="PTHR32044">
    <property type="entry name" value="GLUCOMANNAN 4-BETA-MANNOSYLTRANSFERASE 9"/>
    <property type="match status" value="1"/>
</dbReference>
<dbReference type="PANTHER" id="PTHR32044:SF80">
    <property type="entry name" value="XYLOGLUCAN GLYCOSYLTRANSFERASE 2-RELATED"/>
    <property type="match status" value="1"/>
</dbReference>
<dbReference type="Pfam" id="PF13632">
    <property type="entry name" value="Glyco_trans_2_3"/>
    <property type="match status" value="1"/>
</dbReference>
<dbReference type="SUPFAM" id="SSF53448">
    <property type="entry name" value="Nucleotide-diphospho-sugar transferases"/>
    <property type="match status" value="1"/>
</dbReference>
<keyword id="KW-0961">Cell wall biogenesis/degradation</keyword>
<keyword id="KW-0328">Glycosyltransferase</keyword>
<keyword id="KW-0333">Golgi apparatus</keyword>
<keyword id="KW-0472">Membrane</keyword>
<keyword id="KW-1185">Reference proteome</keyword>
<keyword id="KW-0808">Transferase</keyword>
<keyword id="KW-0812">Transmembrane</keyword>
<keyword id="KW-1133">Transmembrane helix</keyword>
<reference key="1">
    <citation type="journal article" date="2005" name="PLoS Biol.">
        <title>The genomes of Oryza sativa: a history of duplications.</title>
        <authorList>
            <person name="Yu J."/>
            <person name="Wang J."/>
            <person name="Lin W."/>
            <person name="Li S."/>
            <person name="Li H."/>
            <person name="Zhou J."/>
            <person name="Ni P."/>
            <person name="Dong W."/>
            <person name="Hu S."/>
            <person name="Zeng C."/>
            <person name="Zhang J."/>
            <person name="Zhang Y."/>
            <person name="Li R."/>
            <person name="Xu Z."/>
            <person name="Li S."/>
            <person name="Li X."/>
            <person name="Zheng H."/>
            <person name="Cong L."/>
            <person name="Lin L."/>
            <person name="Yin J."/>
            <person name="Geng J."/>
            <person name="Li G."/>
            <person name="Shi J."/>
            <person name="Liu J."/>
            <person name="Lv H."/>
            <person name="Li J."/>
            <person name="Wang J."/>
            <person name="Deng Y."/>
            <person name="Ran L."/>
            <person name="Shi X."/>
            <person name="Wang X."/>
            <person name="Wu Q."/>
            <person name="Li C."/>
            <person name="Ren X."/>
            <person name="Wang J."/>
            <person name="Wang X."/>
            <person name="Li D."/>
            <person name="Liu D."/>
            <person name="Zhang X."/>
            <person name="Ji Z."/>
            <person name="Zhao W."/>
            <person name="Sun Y."/>
            <person name="Zhang Z."/>
            <person name="Bao J."/>
            <person name="Han Y."/>
            <person name="Dong L."/>
            <person name="Ji J."/>
            <person name="Chen P."/>
            <person name="Wu S."/>
            <person name="Liu J."/>
            <person name="Xiao Y."/>
            <person name="Bu D."/>
            <person name="Tan J."/>
            <person name="Yang L."/>
            <person name="Ye C."/>
            <person name="Zhang J."/>
            <person name="Xu J."/>
            <person name="Zhou Y."/>
            <person name="Yu Y."/>
            <person name="Zhang B."/>
            <person name="Zhuang S."/>
            <person name="Wei H."/>
            <person name="Liu B."/>
            <person name="Lei M."/>
            <person name="Yu H."/>
            <person name="Li Y."/>
            <person name="Xu H."/>
            <person name="Wei S."/>
            <person name="He X."/>
            <person name="Fang L."/>
            <person name="Zhang Z."/>
            <person name="Zhang Y."/>
            <person name="Huang X."/>
            <person name="Su Z."/>
            <person name="Tong W."/>
            <person name="Li J."/>
            <person name="Tong Z."/>
            <person name="Li S."/>
            <person name="Ye J."/>
            <person name="Wang L."/>
            <person name="Fang L."/>
            <person name="Lei T."/>
            <person name="Chen C.-S."/>
            <person name="Chen H.-C."/>
            <person name="Xu Z."/>
            <person name="Li H."/>
            <person name="Huang H."/>
            <person name="Zhang F."/>
            <person name="Xu H."/>
            <person name="Li N."/>
            <person name="Zhao C."/>
            <person name="Li S."/>
            <person name="Dong L."/>
            <person name="Huang Y."/>
            <person name="Li L."/>
            <person name="Xi Y."/>
            <person name="Qi Q."/>
            <person name="Li W."/>
            <person name="Zhang B."/>
            <person name="Hu W."/>
            <person name="Zhang Y."/>
            <person name="Tian X."/>
            <person name="Jiao Y."/>
            <person name="Liang X."/>
            <person name="Jin J."/>
            <person name="Gao L."/>
            <person name="Zheng W."/>
            <person name="Hao B."/>
            <person name="Liu S.-M."/>
            <person name="Wang W."/>
            <person name="Yuan L."/>
            <person name="Cao M."/>
            <person name="McDermott J."/>
            <person name="Samudrala R."/>
            <person name="Wang J."/>
            <person name="Wong G.K.-S."/>
            <person name="Yang H."/>
        </authorList>
    </citation>
    <scope>NUCLEOTIDE SEQUENCE [LARGE SCALE GENOMIC DNA]</scope>
    <source>
        <strain>cv. 93-11</strain>
    </source>
</reference>
<reference key="2">
    <citation type="journal article" date="2002" name="Plant Physiol.">
        <title>Cellulose synthase-like genes of rice.</title>
        <authorList>
            <person name="Hazen S.P."/>
            <person name="Scott-Craig J.S."/>
            <person name="Walton J.D."/>
        </authorList>
    </citation>
    <scope>NUCLEOTIDE SEQUENCE [MRNA] OF 214-698</scope>
    <scope>IDENTIFICATION</scope>
</reference>
<feature type="chain" id="PRO_0000319383" description="Probable xyloglucan glycosyltransferase 2">
    <location>
        <begin position="1"/>
        <end position="698"/>
    </location>
</feature>
<feature type="transmembrane region" description="Helical" evidence="2">
    <location>
        <begin position="124"/>
        <end position="144"/>
    </location>
</feature>
<feature type="transmembrane region" description="Helical" evidence="2">
    <location>
        <begin position="190"/>
        <end position="210"/>
    </location>
</feature>
<feature type="transmembrane region" description="Helical" evidence="2">
    <location>
        <begin position="503"/>
        <end position="523"/>
    </location>
</feature>
<feature type="transmembrane region" description="Helical" evidence="2">
    <location>
        <begin position="528"/>
        <end position="548"/>
    </location>
</feature>
<feature type="transmembrane region" description="Helical" evidence="2">
    <location>
        <begin position="653"/>
        <end position="668"/>
    </location>
</feature>
<feature type="transmembrane region" description="Helical" evidence="2">
    <location>
        <begin position="673"/>
        <end position="693"/>
    </location>
</feature>
<feature type="active site" evidence="2">
    <location>
        <position position="272"/>
    </location>
</feature>
<feature type="active site" evidence="2">
    <location>
        <position position="425"/>
    </location>
</feature>
<feature type="binding site" evidence="2">
    <location>
        <position position="331"/>
    </location>
    <ligand>
        <name>substrate</name>
    </ligand>
</feature>
<feature type="binding site" evidence="2">
    <location>
        <position position="333"/>
    </location>
    <ligand>
        <name>substrate</name>
    </ligand>
</feature>
<feature type="sequence conflict" description="In Ref. 1; CM000134." evidence="3" ref="1">
    <original>T</original>
    <variation>A</variation>
    <location>
        <position position="51"/>
    </location>
</feature>
<feature type="sequence conflict" description="In Ref. 1; CM000134." evidence="3" ref="1">
    <original>H</original>
    <variation>R</variation>
    <location>
        <position position="152"/>
    </location>
</feature>
<feature type="sequence conflict" description="In Ref. 1; CM000134." evidence="3" ref="1">
    <original>I</original>
    <variation>M</variation>
    <location>
        <position position="168"/>
    </location>
</feature>
<feature type="sequence conflict" description="In Ref. 1; CM000134." evidence="3" ref="1">
    <original>W</original>
    <variation>R</variation>
    <location>
        <position position="474"/>
    </location>
</feature>
<gene>
    <name type="primary">CSLC2</name>
    <name type="ORF">OsI_030406</name>
</gene>
<comment type="function">
    <text evidence="1">Probable beta-1,4-glucan synthase rather involved in the synthesis of the xyloglucan backbone than cellulose. Seems to work simultaneously with xyloglucan 6-xylosyltransferase. Xyloglucan is a noncellulosic polysaccharides of plant cell wall and consists of a glucan backbone substituted by xylose, galactose and fucose (By similarity).</text>
</comment>
<comment type="subcellular location">
    <subcellularLocation>
        <location evidence="3">Golgi apparatus membrane</location>
        <topology evidence="3">Multi-pass membrane protein</topology>
    </subcellularLocation>
</comment>
<comment type="similarity">
    <text evidence="3">Belongs to the glycosyltransferase 2 family. Plant cellulose synthase-like C subfamily.</text>
</comment>
<protein>
    <recommendedName>
        <fullName>Probable xyloglucan glycosyltransferase 2</fullName>
        <ecNumber>2.4.1.-</ecNumber>
    </recommendedName>
    <alternativeName>
        <fullName>Cellulose synthase-like protein C2</fullName>
    </alternativeName>
    <alternativeName>
        <fullName>OsCslC2</fullName>
    </alternativeName>
</protein>
<sequence>MAPPGVGVGVAYLWGKGRGGRKGTPVVVTMESPNYSVVEVDGPDAEAELRTAAVAMDKGGGRGRSRSRTARQLTWVLLLRARRAAGRLASFAAAAARRFRRSPADAADELGRGRGRLMYGFIRGFLALSLLALAVELAAYWNGWRLRRPELHVPEAVEIEGWAHSAYISWMSFRADYIRRPIEFLSKACILLFVIQSMDRLVLCLGCFWIKLRKIKPRIEGDPFREGSGYQHPMVLVQIPMCNEKEVYEQSISAACQLDWPREKFLIQVLDDSSDESIQLLIKAEVSKWSHQGVNIVYRHRVLRTGYKAGNLKSAMSCDYVKDYEFVAIFDADFQPTPDFLKKTIPHFEGNPELGLVQARWSFVNKDENLLTRLQNINLCFHFEVEQQVNGVFLNFFGFNGTAGVWRIQALEESGGWLERTTVEDMDIAVRAHLNGWKFIFLNDVKVLCELPESYEAYRKQQHRWHSGPMHLFWLCLPDILTAKISSWKKANLILLFFLLRKLILPFYSFTLFCVILPLTMFVPEAELPVWVICYVPVCMSFLNILPSPRSFPFIVPYLLFENTMSVTKFNAMVSGLFKLGSSYEWIVTKKSGRSSESDLSTAVERDTKDLTLPRLQKQISESELIDLKMQKERQEKAPLGAKKANKIYKKELALSLLLLTAATRSLLSAQGIHFYFLLFQGVSFLFVGLDLIGEQID</sequence>
<name>CSLC2_ORYSI</name>